<proteinExistence type="evidence at protein level"/>
<organism>
    <name type="scientific">Oncorhynchus mykiss</name>
    <name type="common">Rainbow trout</name>
    <name type="synonym">Salmo gairdneri</name>
    <dbReference type="NCBI Taxonomy" id="8022"/>
    <lineage>
        <taxon>Eukaryota</taxon>
        <taxon>Metazoa</taxon>
        <taxon>Chordata</taxon>
        <taxon>Craniata</taxon>
        <taxon>Vertebrata</taxon>
        <taxon>Euteleostomi</taxon>
        <taxon>Actinopterygii</taxon>
        <taxon>Neopterygii</taxon>
        <taxon>Teleostei</taxon>
        <taxon>Protacanthopterygii</taxon>
        <taxon>Salmoniformes</taxon>
        <taxon>Salmonidae</taxon>
        <taxon>Salmoninae</taxon>
        <taxon>Oncorhynchus</taxon>
    </lineage>
</organism>
<reference key="1">
    <citation type="journal article" date="2008" name="Fish Shellfish Immunol.">
        <title>Cloning, binding properties, and tissue localization of rainbow trout (Oncorhynchus mykiss) ladderlectin.</title>
        <authorList>
            <person name="Russell S."/>
            <person name="Young K.M."/>
            <person name="Smith M."/>
            <person name="Hayes M.A."/>
            <person name="Lumsden J.S."/>
        </authorList>
    </citation>
    <scope>NUCLEOTIDE SEQUENCE [MRNA] (ISOFORMS 1 AND 2)</scope>
    <scope>TISSUE SPECIFICITY</scope>
</reference>
<reference key="2">
    <citation type="journal article" date="1997" name="Comp. Biochem. Physiol.">
        <title>A rainbow trout lectin with multimeric structure.</title>
        <authorList>
            <person name="Jensen L.E."/>
            <person name="Thiel S."/>
            <person name="Petersen T.E."/>
            <person name="Jensenuis J.C."/>
        </authorList>
    </citation>
    <scope>PROTEIN SEQUENCE OF 45-55</scope>
    <source>
        <tissue>Blood</tissue>
    </source>
</reference>
<sequence length="190" mass="21306">MAMLTISLLLCAAVALNGATVLELFQDFEQALHLGAKGEDERVVAAENRNQCPTGWFQFGSRCFMFVETARSWPLAERHCVSLGANLASVHSSAEYQFLQEVVASKTGGFSTPWIGGFDAVQDRLWFWSDGSEFDYQNWKKGEPNNSGGREPCIVINWRDEYRWNDINCGNSFPSGVLQKNVEIQKNEPT</sequence>
<comment type="function">
    <text>Lectin that binds sepharose in a calcium-dependent manner.</text>
</comment>
<comment type="subunit">
    <text>Multimeric.</text>
</comment>
<comment type="alternative products">
    <event type="alternative splicing"/>
    <isoform>
        <id>P81018-1</id>
        <name evidence="5">1</name>
        <name evidence="4">RTLL-2</name>
        <sequence type="displayed"/>
    </isoform>
    <isoform>
        <id>P81018-2</id>
        <name evidence="5">2</name>
        <name evidence="4">RTLL-1</name>
        <sequence type="described" ref="VSP_057102"/>
    </isoform>
</comment>
<comment type="tissue specificity">
    <text evidence="3">Expressed in cells of the branchial epithelium, hepatic sinusoids, biliary epithelium, renal interstitium, skin, and sub-mucosal granular layer of the intestine. Highly expressed in caudal kidney. Moderately expressed in liver. Weakly expressed in gill, spleen, cranial kidney and skin. Isoform 1 is highly expressed in intestine. Isoform 2 is weakly expressed in intestine.</text>
</comment>
<accession>P81018</accession>
<feature type="signal peptide" evidence="1">
    <location>
        <begin position="1"/>
        <end position="18"/>
    </location>
</feature>
<feature type="chain" id="PRO_0000084351" description="Ladderlectin" evidence="1">
    <location>
        <begin position="19"/>
        <end position="190"/>
    </location>
</feature>
<feature type="domain" description="C-type lectin" evidence="2">
    <location>
        <begin position="60"/>
        <end position="179"/>
    </location>
</feature>
<feature type="disulfide bond" evidence="2">
    <location>
        <begin position="153"/>
        <end position="169"/>
    </location>
</feature>
<feature type="splice variant" id="VSP_057102" description="In isoform 2." evidence="4">
    <location>
        <begin position="21"/>
        <end position="34"/>
    </location>
</feature>
<feature type="sequence conflict" description="In Ref. 1; no nucleotide entry." evidence="5" ref="1">
    <original>L</original>
    <variation>M</variation>
    <location>
        <position position="10"/>
    </location>
</feature>
<feature type="sequence conflict" description="In Ref. 2; AA sequence." evidence="5" ref="2">
    <original>T</original>
    <variation>P</variation>
    <location>
        <position position="54"/>
    </location>
</feature>
<feature type="sequence conflict" description="In Ref. 1; no nucleotide entry." evidence="5" ref="1">
    <original>EVVAS</original>
    <variation>AIAGC</variation>
    <location>
        <begin position="101"/>
        <end position="105"/>
    </location>
</feature>
<feature type="sequence conflict" description="In Ref. 1; no nucleotide entry." evidence="5" ref="1">
    <original>P</original>
    <variation>T</variation>
    <location>
        <position position="113"/>
    </location>
</feature>
<feature type="sequence conflict" description="In Ref. 1; no nucleotide entry." evidence="5" ref="1">
    <original>R</original>
    <variation>G</variation>
    <location>
        <position position="159"/>
    </location>
</feature>
<feature type="sequence conflict" description="In Ref. 1; no nucleotide entry." evidence="5" ref="1">
    <original>I</original>
    <variation>M</variation>
    <location>
        <position position="167"/>
    </location>
</feature>
<keyword id="KW-0025">Alternative splicing</keyword>
<keyword id="KW-0106">Calcium</keyword>
<keyword id="KW-0903">Direct protein sequencing</keyword>
<keyword id="KW-1015">Disulfide bond</keyword>
<keyword id="KW-0430">Lectin</keyword>
<keyword id="KW-0732">Signal</keyword>
<evidence type="ECO:0000255" key="1"/>
<evidence type="ECO:0000255" key="2">
    <source>
        <dbReference type="PROSITE-ProRule" id="PRU00040"/>
    </source>
</evidence>
<evidence type="ECO:0000269" key="3">
    <source>
    </source>
</evidence>
<evidence type="ECO:0000303" key="4">
    <source>
    </source>
</evidence>
<evidence type="ECO:0000305" key="5"/>
<protein>
    <recommendedName>
        <fullName>Ladderlectin</fullName>
    </recommendedName>
</protein>
<name>LADD_ONCMY</name>
<dbReference type="SMR" id="P81018"/>
<dbReference type="Proteomes" id="UP000694395">
    <property type="component" value="Unplaced"/>
</dbReference>
<dbReference type="GO" id="GO:0005903">
    <property type="term" value="C:brush border"/>
    <property type="evidence" value="ECO:0000314"/>
    <property type="project" value="AgBase"/>
</dbReference>
<dbReference type="GO" id="GO:0044194">
    <property type="term" value="C:cytolytic granule"/>
    <property type="evidence" value="ECO:0000314"/>
    <property type="project" value="AgBase"/>
</dbReference>
<dbReference type="GO" id="GO:0005737">
    <property type="term" value="C:cytoplasm"/>
    <property type="evidence" value="ECO:0000314"/>
    <property type="project" value="AgBase"/>
</dbReference>
<dbReference type="GO" id="GO:0005829">
    <property type="term" value="C:cytosol"/>
    <property type="evidence" value="ECO:0000314"/>
    <property type="project" value="AgBase"/>
</dbReference>
<dbReference type="GO" id="GO:0005615">
    <property type="term" value="C:extracellular space"/>
    <property type="evidence" value="ECO:0000314"/>
    <property type="project" value="AgBase"/>
</dbReference>
<dbReference type="GO" id="GO:0005886">
    <property type="term" value="C:plasma membrane"/>
    <property type="evidence" value="ECO:0000314"/>
    <property type="project" value="AgBase"/>
</dbReference>
<dbReference type="GO" id="GO:0030246">
    <property type="term" value="F:carbohydrate binding"/>
    <property type="evidence" value="ECO:0007669"/>
    <property type="project" value="UniProtKB-KW"/>
</dbReference>
<dbReference type="GO" id="GO:0008061">
    <property type="term" value="F:chitin binding"/>
    <property type="evidence" value="ECO:0000314"/>
    <property type="project" value="AgBase"/>
</dbReference>
<dbReference type="FunFam" id="3.10.100.10:FF:000155">
    <property type="entry name" value="Serum lectin isoform 1"/>
    <property type="match status" value="1"/>
</dbReference>
<dbReference type="Gene3D" id="3.10.100.10">
    <property type="entry name" value="Mannose-Binding Protein A, subunit A"/>
    <property type="match status" value="1"/>
</dbReference>
<dbReference type="InterPro" id="IPR001304">
    <property type="entry name" value="C-type_lectin-like"/>
</dbReference>
<dbReference type="InterPro" id="IPR016186">
    <property type="entry name" value="C-type_lectin-like/link_sf"/>
</dbReference>
<dbReference type="InterPro" id="IPR050111">
    <property type="entry name" value="C-type_lectin/snaclec_domain"/>
</dbReference>
<dbReference type="InterPro" id="IPR016187">
    <property type="entry name" value="CTDL_fold"/>
</dbReference>
<dbReference type="PANTHER" id="PTHR22803">
    <property type="entry name" value="MANNOSE, PHOSPHOLIPASE, LECTIN RECEPTOR RELATED"/>
    <property type="match status" value="1"/>
</dbReference>
<dbReference type="Pfam" id="PF00059">
    <property type="entry name" value="Lectin_C"/>
    <property type="match status" value="1"/>
</dbReference>
<dbReference type="PRINTS" id="PR01504">
    <property type="entry name" value="PNCREATITSAP"/>
</dbReference>
<dbReference type="SMART" id="SM00034">
    <property type="entry name" value="CLECT"/>
    <property type="match status" value="1"/>
</dbReference>
<dbReference type="SUPFAM" id="SSF56436">
    <property type="entry name" value="C-type lectin-like"/>
    <property type="match status" value="1"/>
</dbReference>
<dbReference type="PROSITE" id="PS50041">
    <property type="entry name" value="C_TYPE_LECTIN_2"/>
    <property type="match status" value="1"/>
</dbReference>